<name>MCIN_RAT</name>
<dbReference type="SMR" id="D3ZDX9"/>
<dbReference type="FunCoup" id="D3ZDX9">
    <property type="interactions" value="75"/>
</dbReference>
<dbReference type="STRING" id="10116.ENSRNOP00000067993"/>
<dbReference type="PhosphoSitePlus" id="D3ZDX9"/>
<dbReference type="PaxDb" id="10116-ENSRNOP00000067993"/>
<dbReference type="AGR" id="RGD:1584164"/>
<dbReference type="RGD" id="1584164">
    <property type="gene designation" value="Mcidas"/>
</dbReference>
<dbReference type="eggNOG" id="ENOG502R4B5">
    <property type="taxonomic scope" value="Eukaryota"/>
</dbReference>
<dbReference type="InParanoid" id="D3ZDX9"/>
<dbReference type="PRO" id="PR:D3ZDX9"/>
<dbReference type="Proteomes" id="UP000002494">
    <property type="component" value="Unplaced"/>
</dbReference>
<dbReference type="GO" id="GO:0005634">
    <property type="term" value="C:nucleus"/>
    <property type="evidence" value="ECO:0000250"/>
    <property type="project" value="UniProtKB"/>
</dbReference>
<dbReference type="GO" id="GO:0042802">
    <property type="term" value="F:identical protein binding"/>
    <property type="evidence" value="ECO:0000266"/>
    <property type="project" value="RGD"/>
</dbReference>
<dbReference type="GO" id="GO:0098534">
    <property type="term" value="P:centriole assembly"/>
    <property type="evidence" value="ECO:0000250"/>
    <property type="project" value="UniProtKB"/>
</dbReference>
<dbReference type="GO" id="GO:0060271">
    <property type="term" value="P:cilium assembly"/>
    <property type="evidence" value="ECO:0000250"/>
    <property type="project" value="UniProtKB"/>
</dbReference>
<dbReference type="GO" id="GO:0044458">
    <property type="term" value="P:motile cilium assembly"/>
    <property type="evidence" value="ECO:0000250"/>
    <property type="project" value="UniProtKB"/>
</dbReference>
<dbReference type="GO" id="GO:1903251">
    <property type="term" value="P:multi-ciliated epithelial cell differentiation"/>
    <property type="evidence" value="ECO:0000250"/>
    <property type="project" value="UniProtKB"/>
</dbReference>
<dbReference type="GO" id="GO:0045786">
    <property type="term" value="P:negative regulation of cell cycle"/>
    <property type="evidence" value="ECO:0000318"/>
    <property type="project" value="GO_Central"/>
</dbReference>
<dbReference type="GO" id="GO:0045944">
    <property type="term" value="P:positive regulation of transcription by RNA polymerase II"/>
    <property type="evidence" value="ECO:0000250"/>
    <property type="project" value="UniProtKB"/>
</dbReference>
<dbReference type="GO" id="GO:1902017">
    <property type="term" value="P:regulation of cilium assembly"/>
    <property type="evidence" value="ECO:0000250"/>
    <property type="project" value="UniProtKB"/>
</dbReference>
<dbReference type="GO" id="GO:0030174">
    <property type="term" value="P:regulation of DNA-templated DNA replication initiation"/>
    <property type="evidence" value="ECO:0000266"/>
    <property type="project" value="RGD"/>
</dbReference>
<dbReference type="GO" id="GO:0007346">
    <property type="term" value="P:regulation of mitotic cell cycle"/>
    <property type="evidence" value="ECO:0000266"/>
    <property type="project" value="RGD"/>
</dbReference>
<dbReference type="CDD" id="cd22590">
    <property type="entry name" value="McIdas_CC"/>
    <property type="match status" value="1"/>
</dbReference>
<dbReference type="FunFam" id="1.20.5.1180:FF:000001">
    <property type="entry name" value="Truncated geminin"/>
    <property type="match status" value="1"/>
</dbReference>
<dbReference type="Gene3D" id="1.20.5.1180">
    <property type="entry name" value="Geminin coiled-coil domain"/>
    <property type="match status" value="1"/>
</dbReference>
<dbReference type="InterPro" id="IPR022786">
    <property type="entry name" value="Geminin/Multicilin"/>
</dbReference>
<dbReference type="PANTHER" id="PTHR13372">
    <property type="entry name" value="GEMININ"/>
    <property type="match status" value="1"/>
</dbReference>
<dbReference type="PANTHER" id="PTHR13372:SF3">
    <property type="entry name" value="MULTICILIN"/>
    <property type="match status" value="1"/>
</dbReference>
<dbReference type="Pfam" id="PF07412">
    <property type="entry name" value="Geminin"/>
    <property type="match status" value="1"/>
</dbReference>
<dbReference type="SUPFAM" id="SSF111469">
    <property type="entry name" value="Geminin coiled-coil domain"/>
    <property type="match status" value="1"/>
</dbReference>
<reference key="1">
    <citation type="journal article" date="2004" name="Nature">
        <title>Genome sequence of the Brown Norway rat yields insights into mammalian evolution.</title>
        <authorList>
            <person name="Gibbs R.A."/>
            <person name="Weinstock G.M."/>
            <person name="Metzker M.L."/>
            <person name="Muzny D.M."/>
            <person name="Sodergren E.J."/>
            <person name="Scherer S."/>
            <person name="Scott G."/>
            <person name="Steffen D."/>
            <person name="Worley K.C."/>
            <person name="Burch P.E."/>
            <person name="Okwuonu G."/>
            <person name="Hines S."/>
            <person name="Lewis L."/>
            <person name="Deramo C."/>
            <person name="Delgado O."/>
            <person name="Dugan-Rocha S."/>
            <person name="Miner G."/>
            <person name="Morgan M."/>
            <person name="Hawes A."/>
            <person name="Gill R."/>
            <person name="Holt R.A."/>
            <person name="Adams M.D."/>
            <person name="Amanatides P.G."/>
            <person name="Baden-Tillson H."/>
            <person name="Barnstead M."/>
            <person name="Chin S."/>
            <person name="Evans C.A."/>
            <person name="Ferriera S."/>
            <person name="Fosler C."/>
            <person name="Glodek A."/>
            <person name="Gu Z."/>
            <person name="Jennings D."/>
            <person name="Kraft C.L."/>
            <person name="Nguyen T."/>
            <person name="Pfannkoch C.M."/>
            <person name="Sitter C."/>
            <person name="Sutton G.G."/>
            <person name="Venter J.C."/>
            <person name="Woodage T."/>
            <person name="Smith D."/>
            <person name="Lee H.-M."/>
            <person name="Gustafson E."/>
            <person name="Cahill P."/>
            <person name="Kana A."/>
            <person name="Doucette-Stamm L."/>
            <person name="Weinstock K."/>
            <person name="Fechtel K."/>
            <person name="Weiss R.B."/>
            <person name="Dunn D.M."/>
            <person name="Green E.D."/>
            <person name="Blakesley R.W."/>
            <person name="Bouffard G.G."/>
            <person name="De Jong P.J."/>
            <person name="Osoegawa K."/>
            <person name="Zhu B."/>
            <person name="Marra M."/>
            <person name="Schein J."/>
            <person name="Bosdet I."/>
            <person name="Fjell C."/>
            <person name="Jones S."/>
            <person name="Krzywinski M."/>
            <person name="Mathewson C."/>
            <person name="Siddiqui A."/>
            <person name="Wye N."/>
            <person name="McPherson J."/>
            <person name="Zhao S."/>
            <person name="Fraser C.M."/>
            <person name="Shetty J."/>
            <person name="Shatsman S."/>
            <person name="Geer K."/>
            <person name="Chen Y."/>
            <person name="Abramzon S."/>
            <person name="Nierman W.C."/>
            <person name="Havlak P.H."/>
            <person name="Chen R."/>
            <person name="Durbin K.J."/>
            <person name="Egan A."/>
            <person name="Ren Y."/>
            <person name="Song X.-Z."/>
            <person name="Li B."/>
            <person name="Liu Y."/>
            <person name="Qin X."/>
            <person name="Cawley S."/>
            <person name="Cooney A.J."/>
            <person name="D'Souza L.M."/>
            <person name="Martin K."/>
            <person name="Wu J.Q."/>
            <person name="Gonzalez-Garay M.L."/>
            <person name="Jackson A.R."/>
            <person name="Kalafus K.J."/>
            <person name="McLeod M.P."/>
            <person name="Milosavljevic A."/>
            <person name="Virk D."/>
            <person name="Volkov A."/>
            <person name="Wheeler D.A."/>
            <person name="Zhang Z."/>
            <person name="Bailey J.A."/>
            <person name="Eichler E.E."/>
            <person name="Tuzun E."/>
            <person name="Birney E."/>
            <person name="Mongin E."/>
            <person name="Ureta-Vidal A."/>
            <person name="Woodwark C."/>
            <person name="Zdobnov E."/>
            <person name="Bork P."/>
            <person name="Suyama M."/>
            <person name="Torrents D."/>
            <person name="Alexandersson M."/>
            <person name="Trask B.J."/>
            <person name="Young J.M."/>
            <person name="Huang H."/>
            <person name="Wang H."/>
            <person name="Xing H."/>
            <person name="Daniels S."/>
            <person name="Gietzen D."/>
            <person name="Schmidt J."/>
            <person name="Stevens K."/>
            <person name="Vitt U."/>
            <person name="Wingrove J."/>
            <person name="Camara F."/>
            <person name="Mar Alba M."/>
            <person name="Abril J.F."/>
            <person name="Guigo R."/>
            <person name="Smit A."/>
            <person name="Dubchak I."/>
            <person name="Rubin E.M."/>
            <person name="Couronne O."/>
            <person name="Poliakov A."/>
            <person name="Huebner N."/>
            <person name="Ganten D."/>
            <person name="Goesele C."/>
            <person name="Hummel O."/>
            <person name="Kreitler T."/>
            <person name="Lee Y.-A."/>
            <person name="Monti J."/>
            <person name="Schulz H."/>
            <person name="Zimdahl H."/>
            <person name="Himmelbauer H."/>
            <person name="Lehrach H."/>
            <person name="Jacob H.J."/>
            <person name="Bromberg S."/>
            <person name="Gullings-Handley J."/>
            <person name="Jensen-Seaman M.I."/>
            <person name="Kwitek A.E."/>
            <person name="Lazar J."/>
            <person name="Pasko D."/>
            <person name="Tonellato P.J."/>
            <person name="Twigger S."/>
            <person name="Ponting C.P."/>
            <person name="Duarte J.M."/>
            <person name="Rice S."/>
            <person name="Goodstadt L."/>
            <person name="Beatson S.A."/>
            <person name="Emes R.D."/>
            <person name="Winter E.E."/>
            <person name="Webber C."/>
            <person name="Brandt P."/>
            <person name="Nyakatura G."/>
            <person name="Adetobi M."/>
            <person name="Chiaromonte F."/>
            <person name="Elnitski L."/>
            <person name="Eswara P."/>
            <person name="Hardison R.C."/>
            <person name="Hou M."/>
            <person name="Kolbe D."/>
            <person name="Makova K."/>
            <person name="Miller W."/>
            <person name="Nekrutenko A."/>
            <person name="Riemer C."/>
            <person name="Schwartz S."/>
            <person name="Taylor J."/>
            <person name="Yang S."/>
            <person name="Zhang Y."/>
            <person name="Lindpaintner K."/>
            <person name="Andrews T.D."/>
            <person name="Caccamo M."/>
            <person name="Clamp M."/>
            <person name="Clarke L."/>
            <person name="Curwen V."/>
            <person name="Durbin R.M."/>
            <person name="Eyras E."/>
            <person name="Searle S.M."/>
            <person name="Cooper G.M."/>
            <person name="Batzoglou S."/>
            <person name="Brudno M."/>
            <person name="Sidow A."/>
            <person name="Stone E.A."/>
            <person name="Payseur B.A."/>
            <person name="Bourque G."/>
            <person name="Lopez-Otin C."/>
            <person name="Puente X.S."/>
            <person name="Chakrabarti K."/>
            <person name="Chatterji S."/>
            <person name="Dewey C."/>
            <person name="Pachter L."/>
            <person name="Bray N."/>
            <person name="Yap V.B."/>
            <person name="Caspi A."/>
            <person name="Tesler G."/>
            <person name="Pevzner P.A."/>
            <person name="Haussler D."/>
            <person name="Roskin K.M."/>
            <person name="Baertsch R."/>
            <person name="Clawson H."/>
            <person name="Furey T.S."/>
            <person name="Hinrichs A.S."/>
            <person name="Karolchik D."/>
            <person name="Kent W.J."/>
            <person name="Rosenbloom K.R."/>
            <person name="Trumbower H."/>
            <person name="Weirauch M."/>
            <person name="Cooper D.N."/>
            <person name="Stenson P.D."/>
            <person name="Ma B."/>
            <person name="Brent M."/>
            <person name="Arumugam M."/>
            <person name="Shteynberg D."/>
            <person name="Copley R.R."/>
            <person name="Taylor M.S."/>
            <person name="Riethman H."/>
            <person name="Mudunuri U."/>
            <person name="Peterson J."/>
            <person name="Guyer M."/>
            <person name="Felsenfeld A."/>
            <person name="Old S."/>
            <person name="Mockrin S."/>
            <person name="Collins F.S."/>
        </authorList>
    </citation>
    <scope>NUCLEOTIDE SEQUENCE [LARGE SCALE GENOMIC DNA]</scope>
    <source>
        <strain>Brown Norway</strain>
    </source>
</reference>
<gene>
    <name type="primary">Mcidas</name>
    <name type="synonym">Idas</name>
    <name type="synonym">Mci</name>
    <name type="synonym">Mcin</name>
</gene>
<sequence>MHACEGSAAGRRAFDSICPNRMLDLSRRSLGKPGKPERKFVPPWKSFPGCGGGSPVSVYEDPLDAEPAPLPALTTIDLQDLADCTSLLGTEAPPSGDSPASQNPSLQTEADFNLQNFRDAVDDLIADSSSLTSPPLTDGDFPFSPCDVPSFGSCLSPSLDPPALGSPHLPPPPTEQYWKEVADQNQRALGTALIENNQLHVTLTQKQEEIASLRERNVQLKELACRTRHLASVLDKLMITQSPAEPFQLKATTKRSLEELFSATGQAGQGCAEVDAILRDISQRCEEALQNRDPKRPRLQQEPDSKDCSTRNLHGVFRGLRTDCGASSVNLSHSELEEGGSFSTPIRSHSTIRTLAFPQGKAFTIRTVTGGYKFRWVPS</sequence>
<comment type="function">
    <text evidence="1 2">Transcription regulator specifically required for multiciliate cell differentiation. Acts in a multiprotein complex containing E2F4 and E2F5 that binds and activates genes required for centriole biogenesis. Required for the deuterosome-mediated acentriolar pathway. Plays a role in mitotic cell cycle progression by promoting cell cycle exit. Modulates GMNN activity by reducing its affinity for CDT1.</text>
</comment>
<comment type="subunit">
    <text evidence="1">Heterodimer (via coiled-coil domain) with GMNN (via coiled-coil domain); targets GMNN to the nucleus. Can form homodimers (in vitro, via coiled-coil domain), but these are much less stable than the heterodimer formed with GMNN.</text>
</comment>
<comment type="subcellular location">
    <subcellularLocation>
        <location evidence="1">Nucleus</location>
    </subcellularLocation>
    <text evidence="1">Excluded from the nucleolus.</text>
</comment>
<comment type="similarity">
    <text evidence="4">Belongs to the geminin family.</text>
</comment>
<feature type="chain" id="PRO_0000416280" description="Multicilin">
    <location>
        <begin position="1"/>
        <end position="379"/>
    </location>
</feature>
<feature type="region of interest" description="Disordered" evidence="3">
    <location>
        <begin position="26"/>
        <end position="46"/>
    </location>
</feature>
<feature type="region of interest" description="Disordered" evidence="3">
    <location>
        <begin position="87"/>
        <end position="106"/>
    </location>
</feature>
<feature type="region of interest" description="Disordered" evidence="3">
    <location>
        <begin position="289"/>
        <end position="311"/>
    </location>
</feature>
<feature type="coiled-coil region" evidence="1">
    <location>
        <begin position="175"/>
        <end position="223"/>
    </location>
</feature>
<feature type="compositionally biased region" description="Basic and acidic residues" evidence="3">
    <location>
        <begin position="289"/>
        <end position="309"/>
    </location>
</feature>
<protein>
    <recommendedName>
        <fullName>Multicilin</fullName>
    </recommendedName>
    <alternativeName>
        <fullName>Multiciliate differentiation and DNA synthesis-associated cell cycle protein</fullName>
        <shortName>McIdas protein</shortName>
    </alternativeName>
    <alternativeName>
        <fullName>Protein Idas</fullName>
    </alternativeName>
</protein>
<keyword id="KW-0010">Activator</keyword>
<keyword id="KW-0131">Cell cycle</keyword>
<keyword id="KW-0970">Cilium biogenesis/degradation</keyword>
<keyword id="KW-0175">Coiled coil</keyword>
<keyword id="KW-0539">Nucleus</keyword>
<keyword id="KW-1185">Reference proteome</keyword>
<keyword id="KW-0804">Transcription</keyword>
<keyword id="KW-0805">Transcription regulation</keyword>
<evidence type="ECO:0000250" key="1">
    <source>
        <dbReference type="UniProtKB" id="D6RGH6"/>
    </source>
</evidence>
<evidence type="ECO:0000250" key="2">
    <source>
        <dbReference type="UniProtKB" id="Q08B36"/>
    </source>
</evidence>
<evidence type="ECO:0000256" key="3">
    <source>
        <dbReference type="SAM" id="MobiDB-lite"/>
    </source>
</evidence>
<evidence type="ECO:0000305" key="4"/>
<proteinExistence type="inferred from homology"/>
<organism>
    <name type="scientific">Rattus norvegicus</name>
    <name type="common">Rat</name>
    <dbReference type="NCBI Taxonomy" id="10116"/>
    <lineage>
        <taxon>Eukaryota</taxon>
        <taxon>Metazoa</taxon>
        <taxon>Chordata</taxon>
        <taxon>Craniata</taxon>
        <taxon>Vertebrata</taxon>
        <taxon>Euteleostomi</taxon>
        <taxon>Mammalia</taxon>
        <taxon>Eutheria</taxon>
        <taxon>Euarchontoglires</taxon>
        <taxon>Glires</taxon>
        <taxon>Rodentia</taxon>
        <taxon>Myomorpha</taxon>
        <taxon>Muroidea</taxon>
        <taxon>Muridae</taxon>
        <taxon>Murinae</taxon>
        <taxon>Rattus</taxon>
    </lineage>
</organism>
<accession>D3ZDX9</accession>
<accession>D4AE60</accession>